<protein>
    <recommendedName>
        <fullName evidence="1">D-serine dehydratase</fullName>
        <ecNumber evidence="1">4.3.1.18</ecNumber>
    </recommendedName>
    <alternativeName>
        <fullName evidence="1">D-serine deaminase</fullName>
        <shortName evidence="1">DSD</shortName>
    </alternativeName>
</protein>
<organism>
    <name type="scientific">Escherichia coli (strain K12 / DH10B)</name>
    <dbReference type="NCBI Taxonomy" id="316385"/>
    <lineage>
        <taxon>Bacteria</taxon>
        <taxon>Pseudomonadati</taxon>
        <taxon>Pseudomonadota</taxon>
        <taxon>Gammaproteobacteria</taxon>
        <taxon>Enterobacterales</taxon>
        <taxon>Enterobacteriaceae</taxon>
        <taxon>Escherichia</taxon>
    </lineage>
</organism>
<accession>B1X9N9</accession>
<keyword id="KW-0456">Lyase</keyword>
<keyword id="KW-0663">Pyridoxal phosphate</keyword>
<gene>
    <name evidence="1" type="primary">dsdA</name>
    <name type="ordered locus">ECDH10B_2531</name>
</gene>
<comment type="catalytic activity">
    <reaction evidence="1">
        <text>D-serine = pyruvate + NH4(+)</text>
        <dbReference type="Rhea" id="RHEA:13977"/>
        <dbReference type="ChEBI" id="CHEBI:15361"/>
        <dbReference type="ChEBI" id="CHEBI:28938"/>
        <dbReference type="ChEBI" id="CHEBI:35247"/>
        <dbReference type="EC" id="4.3.1.18"/>
    </reaction>
</comment>
<comment type="cofactor">
    <cofactor evidence="1">
        <name>pyridoxal 5'-phosphate</name>
        <dbReference type="ChEBI" id="CHEBI:597326"/>
    </cofactor>
</comment>
<comment type="subunit">
    <text evidence="1">Monomer.</text>
</comment>
<comment type="similarity">
    <text evidence="1">Belongs to the serine/threonine dehydratase family. DsdA subfamily.</text>
</comment>
<reference key="1">
    <citation type="journal article" date="2008" name="J. Bacteriol.">
        <title>The complete genome sequence of Escherichia coli DH10B: insights into the biology of a laboratory workhorse.</title>
        <authorList>
            <person name="Durfee T."/>
            <person name="Nelson R."/>
            <person name="Baldwin S."/>
            <person name="Plunkett G. III"/>
            <person name="Burland V."/>
            <person name="Mau B."/>
            <person name="Petrosino J.F."/>
            <person name="Qin X."/>
            <person name="Muzny D.M."/>
            <person name="Ayele M."/>
            <person name="Gibbs R.A."/>
            <person name="Csorgo B."/>
            <person name="Posfai G."/>
            <person name="Weinstock G.M."/>
            <person name="Blattner F.R."/>
        </authorList>
    </citation>
    <scope>NUCLEOTIDE SEQUENCE [LARGE SCALE GENOMIC DNA]</scope>
    <source>
        <strain>K12 / DH10B</strain>
    </source>
</reference>
<dbReference type="EC" id="4.3.1.18" evidence="1"/>
<dbReference type="EMBL" id="CP000948">
    <property type="protein sequence ID" value="ACB03524.1"/>
    <property type="molecule type" value="Genomic_DNA"/>
</dbReference>
<dbReference type="RefSeq" id="WP_000426427.1">
    <property type="nucleotide sequence ID" value="NC_010473.1"/>
</dbReference>
<dbReference type="SMR" id="B1X9N9"/>
<dbReference type="KEGG" id="ecd:ECDH10B_2531"/>
<dbReference type="HOGENOM" id="CLU_035707_0_0_6"/>
<dbReference type="GO" id="GO:0008721">
    <property type="term" value="F:D-serine ammonia-lyase activity"/>
    <property type="evidence" value="ECO:0007669"/>
    <property type="project" value="UniProtKB-EC"/>
</dbReference>
<dbReference type="GO" id="GO:0016836">
    <property type="term" value="F:hydro-lyase activity"/>
    <property type="evidence" value="ECO:0007669"/>
    <property type="project" value="UniProtKB-UniRule"/>
</dbReference>
<dbReference type="GO" id="GO:0030170">
    <property type="term" value="F:pyridoxal phosphate binding"/>
    <property type="evidence" value="ECO:0007669"/>
    <property type="project" value="InterPro"/>
</dbReference>
<dbReference type="GO" id="GO:0036088">
    <property type="term" value="P:D-serine catabolic process"/>
    <property type="evidence" value="ECO:0007669"/>
    <property type="project" value="TreeGrafter"/>
</dbReference>
<dbReference type="GO" id="GO:0009097">
    <property type="term" value="P:isoleucine biosynthetic process"/>
    <property type="evidence" value="ECO:0007669"/>
    <property type="project" value="TreeGrafter"/>
</dbReference>
<dbReference type="CDD" id="cd06447">
    <property type="entry name" value="D-Ser-dehyd"/>
    <property type="match status" value="1"/>
</dbReference>
<dbReference type="FunFam" id="3.40.50.1100:FF:000018">
    <property type="entry name" value="D-serine dehydratase"/>
    <property type="match status" value="1"/>
</dbReference>
<dbReference type="Gene3D" id="3.40.50.1100">
    <property type="match status" value="2"/>
</dbReference>
<dbReference type="HAMAP" id="MF_01030">
    <property type="entry name" value="D_Ser_dehydrat"/>
    <property type="match status" value="1"/>
</dbReference>
<dbReference type="InterPro" id="IPR011780">
    <property type="entry name" value="D_Ser_am_lyase"/>
</dbReference>
<dbReference type="InterPro" id="IPR050147">
    <property type="entry name" value="Ser/Thr_Dehydratase"/>
</dbReference>
<dbReference type="InterPro" id="IPR000634">
    <property type="entry name" value="Ser/Thr_deHydtase_PyrdxlP-BS"/>
</dbReference>
<dbReference type="InterPro" id="IPR001926">
    <property type="entry name" value="TrpB-like_PALP"/>
</dbReference>
<dbReference type="InterPro" id="IPR036052">
    <property type="entry name" value="TrpB-like_PALP_sf"/>
</dbReference>
<dbReference type="NCBIfam" id="TIGR02035">
    <property type="entry name" value="D_Ser_am_lyase"/>
    <property type="match status" value="1"/>
</dbReference>
<dbReference type="NCBIfam" id="NF002823">
    <property type="entry name" value="PRK02991.1"/>
    <property type="match status" value="1"/>
</dbReference>
<dbReference type="PANTHER" id="PTHR48078:SF9">
    <property type="entry name" value="D-SERINE DEHYDRATASE"/>
    <property type="match status" value="1"/>
</dbReference>
<dbReference type="PANTHER" id="PTHR48078">
    <property type="entry name" value="THREONINE DEHYDRATASE, MITOCHONDRIAL-RELATED"/>
    <property type="match status" value="1"/>
</dbReference>
<dbReference type="Pfam" id="PF00291">
    <property type="entry name" value="PALP"/>
    <property type="match status" value="1"/>
</dbReference>
<dbReference type="SUPFAM" id="SSF53686">
    <property type="entry name" value="Tryptophan synthase beta subunit-like PLP-dependent enzymes"/>
    <property type="match status" value="1"/>
</dbReference>
<dbReference type="PROSITE" id="PS00165">
    <property type="entry name" value="DEHYDRATASE_SER_THR"/>
    <property type="match status" value="1"/>
</dbReference>
<evidence type="ECO:0000255" key="1">
    <source>
        <dbReference type="HAMAP-Rule" id="MF_01030"/>
    </source>
</evidence>
<name>SDHD_ECODH</name>
<proteinExistence type="inferred from homology"/>
<sequence>MENAKMNSLIAQYPLVKDLVALKETTWFNPGTTSLAEGLPYVGLTEQDVQDAHARLSRFAPYLAKAFPETAATGGIIESELVAIPAMQKRLEKEYQQPISGQLLLKKDSHLPISGSIKARGGIYEVLAHAEKLALEAGLLTLDDDYSKLLSPEFKQFFSQYSIAVGSTGNLGLSIGIMSARIGFKVTVHMSADARAWKKAKLRSHGVTVVEYEQDYGVAVEEGRKAAQSDPNCFFIDDENSRTLFLGYSVAGQRLKAQFAQQGRIVDADNPLFVYLPCGVGGGPGGVAFGLKLAFGDHVHCFFAEPTHSPCMLLGVHTGLHDQISVQDIGIDNLTAADGLAVGRASGFVGRAMERLLDGFYTLSDQTMYDMLGWLAQEEGIRLEPSALAGMAGPQRVCASVSYQQMHGFSAEQLRNTTHLVWATGGGMVPEEEMNQYLAKGR</sequence>
<feature type="chain" id="PRO_1000197937" description="D-serine dehydratase">
    <location>
        <begin position="1"/>
        <end position="442"/>
    </location>
</feature>
<feature type="modified residue" description="N6-(pyridoxal phosphate)lysine" evidence="1">
    <location>
        <position position="118"/>
    </location>
</feature>